<sequence>MKGRECARNEASRSWFGACSFASLPDQAVPACSLGSGEIPMAHGTKQKLMKASDIPAFVNEVIEAGCDICAVGHEKYVIGDTDLSRGAYGKMRQRLGRIEEAYGDRDFLKLEIVAYLRSIGRYVDVGADGSE</sequence>
<reference key="1">
    <citation type="journal article" date="1997" name="Nature">
        <title>Molecular basis of symbiosis between Rhizobium and legumes.</title>
        <authorList>
            <person name="Freiberg C.A."/>
            <person name="Fellay R."/>
            <person name="Bairoch A."/>
            <person name="Broughton W.J."/>
            <person name="Rosenthal A."/>
            <person name="Perret X."/>
        </authorList>
    </citation>
    <scope>NUCLEOTIDE SEQUENCE [LARGE SCALE GENOMIC DNA]</scope>
    <source>
        <strain>NBRC 101917 / NGR234</strain>
    </source>
</reference>
<reference key="2">
    <citation type="journal article" date="2009" name="Appl. Environ. Microbiol.">
        <title>Rhizobium sp. strain NGR234 possesses a remarkable number of secretion systems.</title>
        <authorList>
            <person name="Schmeisser C."/>
            <person name="Liesegang H."/>
            <person name="Krysciak D."/>
            <person name="Bakkou N."/>
            <person name="Le Quere A."/>
            <person name="Wollherr A."/>
            <person name="Heinemeyer I."/>
            <person name="Morgenstern B."/>
            <person name="Pommerening-Roeser A."/>
            <person name="Flores M."/>
            <person name="Palacios R."/>
            <person name="Brenner S."/>
            <person name="Gottschalk G."/>
            <person name="Schmitz R.A."/>
            <person name="Broughton W.J."/>
            <person name="Perret X."/>
            <person name="Strittmatter A.W."/>
            <person name="Streit W.R."/>
        </authorList>
    </citation>
    <scope>NUCLEOTIDE SEQUENCE [LARGE SCALE GENOMIC DNA]</scope>
    <source>
        <strain>NBRC 101917 / NGR234</strain>
    </source>
</reference>
<accession>P55551</accession>
<dbReference type="EMBL" id="U00090">
    <property type="protein sequence ID" value="AAB91763.1"/>
    <property type="molecule type" value="Genomic_DNA"/>
</dbReference>
<dbReference type="RefSeq" id="NP_443961.1">
    <property type="nucleotide sequence ID" value="NC_000914.2"/>
</dbReference>
<dbReference type="KEGG" id="rhi:NGR_a02640"/>
<dbReference type="eggNOG" id="ENOG502ZERJ">
    <property type="taxonomic scope" value="Bacteria"/>
</dbReference>
<dbReference type="HOGENOM" id="CLU_157970_0_0_5"/>
<dbReference type="OrthoDB" id="8420231at2"/>
<dbReference type="Proteomes" id="UP000001054">
    <property type="component" value="Plasmid pNGR234a"/>
</dbReference>
<organism>
    <name type="scientific">Sinorhizobium fredii (strain NBRC 101917 / NGR234)</name>
    <dbReference type="NCBI Taxonomy" id="394"/>
    <lineage>
        <taxon>Bacteria</taxon>
        <taxon>Pseudomonadati</taxon>
        <taxon>Pseudomonadota</taxon>
        <taxon>Alphaproteobacteria</taxon>
        <taxon>Hyphomicrobiales</taxon>
        <taxon>Rhizobiaceae</taxon>
        <taxon>Sinorhizobium/Ensifer group</taxon>
        <taxon>Sinorhizobium</taxon>
    </lineage>
</organism>
<protein>
    <recommendedName>
        <fullName>Uncharacterized protein y4lK</fullName>
    </recommendedName>
</protein>
<gene>
    <name type="ordered locus">NGR_a02640</name>
    <name type="ORF">y4lK</name>
</gene>
<name>Y4LK_SINFN</name>
<proteinExistence type="predicted"/>
<keyword id="KW-0614">Plasmid</keyword>
<keyword id="KW-1185">Reference proteome</keyword>
<feature type="chain" id="PRO_0000200905" description="Uncharacterized protein y4lK">
    <location>
        <begin position="1"/>
        <end position="132"/>
    </location>
</feature>
<geneLocation type="plasmid">
    <name>sym pNGR234a</name>
</geneLocation>